<evidence type="ECO:0000255" key="1">
    <source>
        <dbReference type="HAMAP-Rule" id="MF_00438"/>
    </source>
</evidence>
<evidence type="ECO:0000305" key="2"/>
<dbReference type="EMBL" id="CP000551">
    <property type="protein sequence ID" value="ABM69629.1"/>
    <property type="molecule type" value="Genomic_DNA"/>
</dbReference>
<dbReference type="RefSeq" id="WP_011817804.1">
    <property type="nucleotide sequence ID" value="NC_008816.1"/>
</dbReference>
<dbReference type="SMR" id="A2BPB8"/>
<dbReference type="STRING" id="146891.A9601_03411"/>
<dbReference type="KEGG" id="pmb:A9601_03411"/>
<dbReference type="HOGENOM" id="CLU_215415_0_0_3"/>
<dbReference type="OrthoDB" id="532820at2"/>
<dbReference type="Proteomes" id="UP000002590">
    <property type="component" value="Chromosome"/>
</dbReference>
<dbReference type="GO" id="GO:0009523">
    <property type="term" value="C:photosystem II"/>
    <property type="evidence" value="ECO:0007669"/>
    <property type="project" value="UniProtKB-KW"/>
</dbReference>
<dbReference type="GO" id="GO:0031676">
    <property type="term" value="C:plasma membrane-derived thylakoid membrane"/>
    <property type="evidence" value="ECO:0007669"/>
    <property type="project" value="UniProtKB-SubCell"/>
</dbReference>
<dbReference type="GO" id="GO:0019684">
    <property type="term" value="P:photosynthesis, light reaction"/>
    <property type="evidence" value="ECO:0007669"/>
    <property type="project" value="InterPro"/>
</dbReference>
<dbReference type="HAMAP" id="MF_00438">
    <property type="entry name" value="PSII_PsbM"/>
    <property type="match status" value="1"/>
</dbReference>
<dbReference type="InterPro" id="IPR007826">
    <property type="entry name" value="PSII_PsbM"/>
</dbReference>
<dbReference type="InterPro" id="IPR037269">
    <property type="entry name" value="PSII_PsbM_sf"/>
</dbReference>
<dbReference type="NCBIfam" id="NF010694">
    <property type="entry name" value="PRK14094.1"/>
    <property type="match status" value="1"/>
</dbReference>
<dbReference type="NCBIfam" id="TIGR03038">
    <property type="entry name" value="PS_II_psbM"/>
    <property type="match status" value="1"/>
</dbReference>
<dbReference type="Pfam" id="PF05151">
    <property type="entry name" value="PsbM"/>
    <property type="match status" value="1"/>
</dbReference>
<dbReference type="SUPFAM" id="SSF161033">
    <property type="entry name" value="Photosystem II reaction center protein M, PsbM"/>
    <property type="match status" value="1"/>
</dbReference>
<reference key="1">
    <citation type="journal article" date="2007" name="PLoS Genet.">
        <title>Patterns and implications of gene gain and loss in the evolution of Prochlorococcus.</title>
        <authorList>
            <person name="Kettler G.C."/>
            <person name="Martiny A.C."/>
            <person name="Huang K."/>
            <person name="Zucker J."/>
            <person name="Coleman M.L."/>
            <person name="Rodrigue S."/>
            <person name="Chen F."/>
            <person name="Lapidus A."/>
            <person name="Ferriera S."/>
            <person name="Johnson J."/>
            <person name="Steglich C."/>
            <person name="Church G.M."/>
            <person name="Richardson P."/>
            <person name="Chisholm S.W."/>
        </authorList>
    </citation>
    <scope>NUCLEOTIDE SEQUENCE [LARGE SCALE GENOMIC DNA]</scope>
    <source>
        <strain>AS9601</strain>
    </source>
</reference>
<comment type="function">
    <text evidence="1">One of the components of the core complex of photosystem II (PSII). PSII is a light-driven water:plastoquinone oxidoreductase that uses light energy to abstract electrons from H(2)O, generating O(2) and a proton gradient subsequently used for ATP formation. It consists of a core antenna complex that captures photons, and an electron transfer chain that converts photonic excitation into a charge separation. This subunit is found at the monomer-monomer interface.</text>
</comment>
<comment type="subunit">
    <text evidence="2">PSII is composed of 1 copy each of membrane proteins PsbA, PsbB, PsbC, PsbD, PsbE, PsbF, PsbH, PsbI, PsbJ, PsbK, PsbL, PsbM, PsbT, PsbX, PsbY, Psb30/Ycf12, peripheral proteins PsbO, CyanoQ (PsbQ), PsbU, PsbV and a large number of cofactors. It forms dimeric complexes.</text>
</comment>
<comment type="subcellular location">
    <subcellularLocation>
        <location evidence="1">Cellular thylakoid membrane</location>
        <topology evidence="1">Single-pass membrane protein</topology>
    </subcellularLocation>
</comment>
<comment type="similarity">
    <text evidence="1">Belongs to the PsbM family.</text>
</comment>
<keyword id="KW-0472">Membrane</keyword>
<keyword id="KW-0602">Photosynthesis</keyword>
<keyword id="KW-0604">Photosystem II</keyword>
<keyword id="KW-0674">Reaction center</keyword>
<keyword id="KW-0793">Thylakoid</keyword>
<keyword id="KW-0812">Transmembrane</keyword>
<keyword id="KW-1133">Transmembrane helix</keyword>
<accession>A2BPB8</accession>
<proteinExistence type="inferred from homology"/>
<sequence>METTNFGFVASLLFVGVPTIFLIGLFISTQDGEKSSFYSDSSKGRLGPKR</sequence>
<name>PSBM_PROMS</name>
<protein>
    <recommendedName>
        <fullName evidence="1">Photosystem II reaction center protein M</fullName>
        <shortName evidence="1">PSII-M</shortName>
    </recommendedName>
</protein>
<gene>
    <name evidence="1" type="primary">psbM</name>
    <name type="ordered locus">A9601_03411</name>
</gene>
<organism>
    <name type="scientific">Prochlorococcus marinus (strain AS9601)</name>
    <dbReference type="NCBI Taxonomy" id="146891"/>
    <lineage>
        <taxon>Bacteria</taxon>
        <taxon>Bacillati</taxon>
        <taxon>Cyanobacteriota</taxon>
        <taxon>Cyanophyceae</taxon>
        <taxon>Synechococcales</taxon>
        <taxon>Prochlorococcaceae</taxon>
        <taxon>Prochlorococcus</taxon>
    </lineage>
</organism>
<feature type="chain" id="PRO_1000025959" description="Photosystem II reaction center protein M">
    <location>
        <begin position="1"/>
        <end position="50"/>
    </location>
</feature>
<feature type="transmembrane region" description="Helical" evidence="1">
    <location>
        <begin position="7"/>
        <end position="27"/>
    </location>
</feature>